<organism>
    <name type="scientific">Mus musculus</name>
    <name type="common">Mouse</name>
    <dbReference type="NCBI Taxonomy" id="10090"/>
    <lineage>
        <taxon>Eukaryota</taxon>
        <taxon>Metazoa</taxon>
        <taxon>Chordata</taxon>
        <taxon>Craniata</taxon>
        <taxon>Vertebrata</taxon>
        <taxon>Euteleostomi</taxon>
        <taxon>Mammalia</taxon>
        <taxon>Eutheria</taxon>
        <taxon>Euarchontoglires</taxon>
        <taxon>Glires</taxon>
        <taxon>Rodentia</taxon>
        <taxon>Myomorpha</taxon>
        <taxon>Muroidea</taxon>
        <taxon>Muridae</taxon>
        <taxon>Murinae</taxon>
        <taxon>Mus</taxon>
        <taxon>Mus</taxon>
    </lineage>
</organism>
<reference key="1">
    <citation type="submission" date="2001-10" db="EMBL/GenBank/DDBJ databases">
        <title>Molecular cloning of mouse Scribble cDNA.</title>
        <authorList>
            <person name="Mattock K.L."/>
            <person name="Kurschner C."/>
        </authorList>
    </citation>
    <scope>NUCLEOTIDE SEQUENCE [MRNA] (ISOFORM 3)</scope>
    <source>
        <strain>C57BL/6J</strain>
        <tissue>Cerebellum</tissue>
    </source>
</reference>
<reference key="2">
    <citation type="journal article" date="2003" name="DNA Res.">
        <title>Prediction of the coding sequences of mouse homologues of KIAA gene: II. The complete nucleotide sequences of 400 mouse KIAA-homologous cDNAs identified by screening of terminal sequences of cDNA clones randomly sampled from size-fractionated libraries.</title>
        <authorList>
            <person name="Okazaki N."/>
            <person name="Kikuno R."/>
            <person name="Ohara R."/>
            <person name="Inamoto S."/>
            <person name="Aizawa H."/>
            <person name="Yuasa S."/>
            <person name="Nakajima D."/>
            <person name="Nagase T."/>
            <person name="Ohara O."/>
            <person name="Koga H."/>
        </authorList>
    </citation>
    <scope>NUCLEOTIDE SEQUENCE [LARGE SCALE MRNA] (ISOFORM 2)</scope>
    <source>
        <tissue>Brain</tissue>
    </source>
</reference>
<reference key="3">
    <citation type="journal article" date="2004" name="Genome Res.">
        <title>The status, quality, and expansion of the NIH full-length cDNA project: the Mammalian Gene Collection (MGC).</title>
        <authorList>
            <consortium name="The MGC Project Team"/>
        </authorList>
    </citation>
    <scope>NUCLEOTIDE SEQUENCE [LARGE SCALE MRNA] (ISOFORMS 1; 3 AND 4)</scope>
    <source>
        <strain>C57BL/6J</strain>
        <tissue>Brain</tissue>
        <tissue>Mammary tumor</tissue>
    </source>
</reference>
<reference key="4">
    <citation type="journal article" date="2005" name="BMC Cell Biol.">
        <title>The tumor suppressor Scrib interacts with the zyxin-related protein LPP, which shuttles between cell adhesion sites and the nucleus.</title>
        <authorList>
            <person name="Petit M.M.R."/>
            <person name="Meulemans S.M.P."/>
            <person name="Alen P."/>
            <person name="Ayoubi T.A.Y."/>
            <person name="Jansen E."/>
            <person name="Van de Ven W.J.M."/>
        </authorList>
    </citation>
    <scope>NUCLEOTIDE SEQUENCE [MRNA] OF 694-1336 (ISOFORM 1)</scope>
</reference>
<reference key="5">
    <citation type="journal article" date="2003" name="Hum. Mol. Genet.">
        <title>Disruption of scribble (Scrb1) causes severe neural tube defects in the circletail mouse.</title>
        <authorList>
            <person name="Murdoch J.N."/>
            <person name="Henderson D.J."/>
            <person name="Doudney K."/>
            <person name="Gaston-Massuet C."/>
            <person name="Phillips H.M."/>
            <person name="Paternotte C."/>
            <person name="Arkell R."/>
            <person name="Stanier P."/>
            <person name="Copp A.J."/>
        </authorList>
    </citation>
    <scope>FUNCTION</scope>
    <scope>DEVELOPMENTAL STAGE</scope>
</reference>
<reference key="6">
    <citation type="journal article" date="2004" name="Curr. Biol.">
        <title>Mammalian Scribble forms a tight complex with the betaPIX exchange factor.</title>
        <authorList>
            <person name="Audebert S."/>
            <person name="Navarro C."/>
            <person name="Nourry C."/>
            <person name="Chasserot-Golaz S."/>
            <person name="Lecine P."/>
            <person name="Bellaiche Y."/>
            <person name="Dupont J.-L."/>
            <person name="Premont R.T."/>
            <person name="Sempere C."/>
            <person name="Strub J.-M."/>
            <person name="Van Dorsselaer A."/>
            <person name="Vitale N."/>
            <person name="Borg J.-P."/>
        </authorList>
    </citation>
    <scope>INTERACTION WITH ARHGEF7 AND GIT1</scope>
    <scope>TISSUE SPECIFICITY</scope>
</reference>
<reference key="7">
    <citation type="journal article" date="2004" name="Mol. Cell. Proteomics">
        <title>Phosphoproteomic analysis of the developing mouse brain.</title>
        <authorList>
            <person name="Ballif B.A."/>
            <person name="Villen J."/>
            <person name="Beausoleil S.A."/>
            <person name="Schwartz D."/>
            <person name="Gygi S.P."/>
        </authorList>
    </citation>
    <scope>PHOSPHORYLATION [LARGE SCALE ANALYSIS] AT SER-1601</scope>
    <scope>IDENTIFICATION BY MASS SPECTROMETRY [LARGE SCALE ANALYSIS]</scope>
    <source>
        <tissue>Embryonic brain</tissue>
    </source>
</reference>
<reference key="8">
    <citation type="journal article" date="2005" name="Biochim. Biophys. Acta">
        <title>Outer membrane protein 25-a mitochondrial anchor and inhibitor of stress-activated protein kinase-3.</title>
        <authorList>
            <person name="Court N.W."/>
            <person name="Ingley E."/>
            <person name="Klinken S.P."/>
            <person name="Bogoyevitch M.A."/>
        </authorList>
    </citation>
    <scope>INTERACTION WITH MAPK12</scope>
</reference>
<reference key="9">
    <citation type="journal article" date="2005" name="Oncogene">
        <title>Junctional recruitment of mammalian Scribble relies on E-cadherin engagement.</title>
        <authorList>
            <person name="Navarro C."/>
            <person name="Nola S."/>
            <person name="Audebert S."/>
            <person name="Santoni M.-J."/>
            <person name="Arsanto J.-P."/>
            <person name="Ginestier C."/>
            <person name="Marchetto S."/>
            <person name="Jacquemier J."/>
            <person name="Isnardon D."/>
            <person name="Le Bivic A."/>
            <person name="Birnbaum D."/>
            <person name="Borg J.-P."/>
        </authorList>
    </citation>
    <scope>TISSUE SPECIFICITY</scope>
</reference>
<reference key="10">
    <citation type="journal article" date="2006" name="Genes Cells">
        <title>Human scribble, a novel tumor suppressor identified as a target of high-risk HPV E6 for ubiquitin-mediated degradation, interacts with adenomatous polyposis coli.</title>
        <authorList>
            <person name="Takizawa S."/>
            <person name="Nagasaka K."/>
            <person name="Nakagawa S."/>
            <person name="Yano T."/>
            <person name="Nakagawa K."/>
            <person name="Yasugi T."/>
            <person name="Takeuchi T."/>
            <person name="Kanda T."/>
            <person name="Huibregtse J.M."/>
            <person name="Akiyama T."/>
            <person name="Taketani Y."/>
        </authorList>
    </citation>
    <scope>INTERACTION WITH APC AND CTNNB1</scope>
    <scope>SUBCELLULAR LOCATION</scope>
</reference>
<reference key="11">
    <citation type="journal article" date="2006" name="J. Neurosci.">
        <title>Asymmetric localization of Vangl2 and Fz3 indicate novel mechanisms for planar cell polarity in mammals.</title>
        <authorList>
            <person name="Montcouquiol M."/>
            <person name="Sans N."/>
            <person name="Huss D."/>
            <person name="Kach J."/>
            <person name="Dickman J.D."/>
            <person name="Forge A."/>
            <person name="Rachel R.A."/>
            <person name="Copeland N.G."/>
            <person name="Jenkins N.A."/>
            <person name="Bogani D."/>
            <person name="Murdoch J."/>
            <person name="Warchol M.E."/>
            <person name="Wenthold R.J."/>
            <person name="Kelley M.W."/>
        </authorList>
    </citation>
    <scope>INTERACTION WITH VANGL2</scope>
</reference>
<reference key="12">
    <citation type="journal article" date="2007" name="Proc. Natl. Acad. Sci. U.S.A.">
        <title>Large-scale phosphorylation analysis of mouse liver.</title>
        <authorList>
            <person name="Villen J."/>
            <person name="Beausoleil S.A."/>
            <person name="Gerber S.A."/>
            <person name="Gygi S.P."/>
        </authorList>
    </citation>
    <scope>PHOSPHORYLATION [LARGE SCALE ANALYSIS] AT THR-674; THR-675 AND SER-1206</scope>
    <scope>IDENTIFICATION BY MASS SPECTROMETRY [LARGE SCALE ANALYSIS]</scope>
    <source>
        <tissue>Liver</tissue>
    </source>
</reference>
<reference key="13">
    <citation type="journal article" date="2008" name="Cell">
        <title>Regulation of a late phase of T cell polarity and effector functions by Crtam.</title>
        <authorList>
            <person name="Yeh J.H."/>
            <person name="Sidhu S.S."/>
            <person name="Chan A.C."/>
        </authorList>
    </citation>
    <scope>FUNCTION</scope>
    <scope>INTERACTION WITH CRTAM</scope>
    <scope>SUBCELLULAR LOCATION</scope>
    <scope>TISSUE SPECIFICITY</scope>
</reference>
<reference key="14">
    <citation type="journal article" date="2008" name="Cell">
        <title>Deregulation of scribble promotes mammary tumorigenesis and reveals a role for cell polarity in carcinoma.</title>
        <authorList>
            <person name="Zhan L."/>
            <person name="Rosenberg A."/>
            <person name="Bergami K.C."/>
            <person name="Yu M."/>
            <person name="Xuan Z."/>
            <person name="Jaffe A.B."/>
            <person name="Allred C."/>
            <person name="Muthuswamy S.K."/>
        </authorList>
    </citation>
    <scope>FUNCTION</scope>
</reference>
<reference key="15">
    <citation type="journal article" date="2008" name="Hum. Mol. Genet.">
        <title>Scrib regulates PAK activity during the cell migration process.</title>
        <authorList>
            <person name="Nola S."/>
            <person name="Sebbagh M."/>
            <person name="Marchetto S."/>
            <person name="Osmani N."/>
            <person name="Nourry C."/>
            <person name="Audebert S."/>
            <person name="Navarro C."/>
            <person name="Rachel R."/>
            <person name="Montcouquiol M."/>
            <person name="Sans N."/>
            <person name="Etienne-Manneville S."/>
            <person name="Borg J.-P."/>
            <person name="Santoni M.-J."/>
        </authorList>
    </citation>
    <scope>FUNCTION IN CELL MIGRATION</scope>
    <scope>INTERACTION WITH PAK1 AND PAK2</scope>
</reference>
<reference key="16">
    <citation type="journal article" date="2009" name="Immunity">
        <title>The phagosomal proteome in interferon-gamma-activated macrophages.</title>
        <authorList>
            <person name="Trost M."/>
            <person name="English L."/>
            <person name="Lemieux S."/>
            <person name="Courcelles M."/>
            <person name="Desjardins M."/>
            <person name="Thibault P."/>
        </authorList>
    </citation>
    <scope>PHOSPHORYLATION [LARGE SCALE ANALYSIS] AT SER-1206 AND SER-1601</scope>
    <scope>IDENTIFICATION BY MASS SPECTROMETRY [LARGE SCALE ANALYSIS]</scope>
</reference>
<reference key="17">
    <citation type="journal article" date="2009" name="Mol. Biol. Cell">
        <title>Vimentin regulates scribble activity by protecting it from proteasomal degradation.</title>
        <authorList>
            <person name="Phua D.C."/>
            <person name="Humbert P.O."/>
            <person name="Hunziker W."/>
        </authorList>
    </citation>
    <scope>INTERACTION WITH VIM</scope>
</reference>
<reference key="18">
    <citation type="journal article" date="2009" name="Mol. Biol. Cell">
        <title>Scribble interacts with beta-catenin to localize synaptic vesicles to synapses.</title>
        <authorList>
            <person name="Sun Y."/>
            <person name="Aiga M."/>
            <person name="Yoshida E."/>
            <person name="Humbert P.O."/>
            <person name="Bamji S.X."/>
        </authorList>
    </citation>
    <scope>FUNCTION</scope>
    <scope>INTERACTION WITH CTNNB1</scope>
</reference>
<reference key="19">
    <citation type="journal article" date="2010" name="Cell">
        <title>A tissue-specific atlas of mouse protein phosphorylation and expression.</title>
        <authorList>
            <person name="Huttlin E.L."/>
            <person name="Jedrychowski M.P."/>
            <person name="Elias J.E."/>
            <person name="Goswami T."/>
            <person name="Rad R."/>
            <person name="Beausoleil S.A."/>
            <person name="Villen J."/>
            <person name="Haas W."/>
            <person name="Sowa M.E."/>
            <person name="Gygi S.P."/>
        </authorList>
    </citation>
    <scope>PHOSPHORYLATION [LARGE SCALE ANALYSIS] AT SER-583; THR-674; THR-675; SER-925; SER-1206; SER-1320; SER-1389; SER-1485; SER-1518; SER-1557; SER-1571 AND SER-1601</scope>
    <scope>PHOSPHORYLATION [LARGE SCALE ANALYSIS] AT SER-1299 (ISOFORM 4)</scope>
    <scope>IDENTIFICATION BY MASS SPECTROMETRY [LARGE SCALE ANALYSIS]</scope>
    <source>
        <tissue>Brain</tissue>
        <tissue>Brown adipose tissue</tissue>
        <tissue>Heart</tissue>
        <tissue>Kidney</tissue>
        <tissue>Liver</tissue>
        <tissue>Lung</tissue>
        <tissue>Pancreas</tissue>
        <tissue>Spleen</tissue>
        <tissue>Testis</tissue>
    </source>
</reference>
<reference key="20">
    <citation type="journal article" date="2014" name="Mol. Cell. Proteomics">
        <title>Immunoaffinity enrichment and mass spectrometry analysis of protein methylation.</title>
        <authorList>
            <person name="Guo A."/>
            <person name="Gu H."/>
            <person name="Zhou J."/>
            <person name="Mulhern D."/>
            <person name="Wang Y."/>
            <person name="Lee K.A."/>
            <person name="Yang V."/>
            <person name="Aguiar M."/>
            <person name="Kornhauser J."/>
            <person name="Jia X."/>
            <person name="Ren J."/>
            <person name="Beausoleil S.A."/>
            <person name="Silva J.C."/>
            <person name="Vemulapalli V."/>
            <person name="Bedford M.T."/>
            <person name="Comb M.J."/>
        </authorList>
    </citation>
    <scope>METHYLATION [LARGE SCALE ANALYSIS] AT ARG-1312</scope>
    <scope>METHYLATION [LARGE SCALE ANALYSIS] AT ARG-1291 (ISOFORM 4)</scope>
    <scope>IDENTIFICATION BY MASS SPECTROMETRY [LARGE SCALE ANALYSIS]</scope>
    <source>
        <tissue>Brain</tissue>
        <tissue>Embryo</tissue>
    </source>
</reference>
<feature type="chain" id="PRO_0000188304" description="Protein scribble homolog">
    <location>
        <begin position="1"/>
        <end position="1665"/>
    </location>
</feature>
<feature type="repeat" description="LRR 1">
    <location>
        <begin position="37"/>
        <end position="58"/>
    </location>
</feature>
<feature type="repeat" description="LRR 2">
    <location>
        <begin position="60"/>
        <end position="81"/>
    </location>
</feature>
<feature type="repeat" description="LRR 3">
    <location>
        <begin position="83"/>
        <end position="104"/>
    </location>
</feature>
<feature type="repeat" description="LRR 4">
    <location>
        <begin position="106"/>
        <end position="127"/>
    </location>
</feature>
<feature type="repeat" description="LRR 5">
    <location>
        <begin position="129"/>
        <end position="150"/>
    </location>
</feature>
<feature type="repeat" description="LRR 6">
    <location>
        <begin position="152"/>
        <end position="174"/>
    </location>
</feature>
<feature type="repeat" description="LRR 7">
    <location>
        <begin position="175"/>
        <end position="197"/>
    </location>
</feature>
<feature type="repeat" description="LRR 8">
    <location>
        <begin position="198"/>
        <end position="219"/>
    </location>
</feature>
<feature type="repeat" description="LRR 9">
    <location>
        <begin position="221"/>
        <end position="243"/>
    </location>
</feature>
<feature type="repeat" description="LRR 10">
    <location>
        <begin position="244"/>
        <end position="265"/>
    </location>
</feature>
<feature type="repeat" description="LRR 11">
    <location>
        <begin position="267"/>
        <end position="288"/>
    </location>
</feature>
<feature type="repeat" description="LRR 12">
    <location>
        <begin position="290"/>
        <end position="312"/>
    </location>
</feature>
<feature type="repeat" description="LRR 13">
    <location>
        <begin position="313"/>
        <end position="334"/>
    </location>
</feature>
<feature type="repeat" description="LRR 14">
    <location>
        <begin position="336"/>
        <end position="357"/>
    </location>
</feature>
<feature type="repeat" description="LRR 15">
    <location>
        <begin position="359"/>
        <end position="381"/>
    </location>
</feature>
<feature type="repeat" description="LRR 16">
    <location>
        <begin position="382"/>
        <end position="402"/>
    </location>
</feature>
<feature type="domain" description="PDZ 1" evidence="5">
    <location>
        <begin position="714"/>
        <end position="801"/>
    </location>
</feature>
<feature type="domain" description="PDZ 2" evidence="5">
    <location>
        <begin position="848"/>
        <end position="936"/>
    </location>
</feature>
<feature type="domain" description="PDZ 3" evidence="5">
    <location>
        <begin position="990"/>
        <end position="1079"/>
    </location>
</feature>
<feature type="domain" description="PDZ 4" evidence="5">
    <location>
        <begin position="1086"/>
        <end position="1180"/>
    </location>
</feature>
<feature type="region of interest" description="Sufficient for targeting to adherens junction and to inhibit cell proliferation" evidence="1">
    <location>
        <begin position="1"/>
        <end position="804"/>
    </location>
</feature>
<feature type="region of interest" description="Disordered" evidence="6">
    <location>
        <begin position="422"/>
        <end position="615"/>
    </location>
</feature>
<feature type="region of interest" description="Disordered" evidence="6">
    <location>
        <begin position="635"/>
        <end position="689"/>
    </location>
</feature>
<feature type="region of interest" description="Interaction with ARHGEF7" evidence="1">
    <location>
        <begin position="703"/>
        <end position="1215"/>
    </location>
</feature>
<feature type="region of interest" description="Required for interaction with VIM" evidence="3">
    <location>
        <begin position="714"/>
        <end position="1180"/>
    </location>
</feature>
<feature type="region of interest" description="Disordered" evidence="6">
    <location>
        <begin position="1213"/>
        <end position="1246"/>
    </location>
</feature>
<feature type="region of interest" description="Disordered" evidence="6">
    <location>
        <begin position="1263"/>
        <end position="1325"/>
    </location>
</feature>
<feature type="region of interest" description="Disordered" evidence="6">
    <location>
        <begin position="1341"/>
        <end position="1501"/>
    </location>
</feature>
<feature type="region of interest" description="Disordered" evidence="6">
    <location>
        <begin position="1530"/>
        <end position="1577"/>
    </location>
</feature>
<feature type="region of interest" description="Disordered" evidence="6">
    <location>
        <begin position="1632"/>
        <end position="1665"/>
    </location>
</feature>
<feature type="coiled-coil region" evidence="4">
    <location>
        <begin position="455"/>
        <end position="475"/>
    </location>
</feature>
<feature type="coiled-coil region" evidence="4">
    <location>
        <begin position="653"/>
        <end position="687"/>
    </location>
</feature>
<feature type="coiled-coil region" evidence="4">
    <location>
        <begin position="1390"/>
        <end position="1421"/>
    </location>
</feature>
<feature type="compositionally biased region" description="Polar residues" evidence="6">
    <location>
        <begin position="428"/>
        <end position="437"/>
    </location>
</feature>
<feature type="compositionally biased region" description="Acidic residues" evidence="6">
    <location>
        <begin position="452"/>
        <end position="463"/>
    </location>
</feature>
<feature type="compositionally biased region" description="Basic and acidic residues" evidence="6">
    <location>
        <begin position="479"/>
        <end position="494"/>
    </location>
</feature>
<feature type="compositionally biased region" description="Basic and acidic residues" evidence="6">
    <location>
        <begin position="570"/>
        <end position="580"/>
    </location>
</feature>
<feature type="compositionally biased region" description="Acidic residues" evidence="6">
    <location>
        <begin position="657"/>
        <end position="681"/>
    </location>
</feature>
<feature type="compositionally biased region" description="Basic and acidic residues" evidence="6">
    <location>
        <begin position="1213"/>
        <end position="1228"/>
    </location>
</feature>
<feature type="compositionally biased region" description="Polar residues" evidence="6">
    <location>
        <begin position="1264"/>
        <end position="1277"/>
    </location>
</feature>
<feature type="compositionally biased region" description="Basic and acidic residues" evidence="6">
    <location>
        <begin position="1364"/>
        <end position="1376"/>
    </location>
</feature>
<feature type="compositionally biased region" description="Basic and acidic residues" evidence="6">
    <location>
        <begin position="1394"/>
        <end position="1406"/>
    </location>
</feature>
<feature type="compositionally biased region" description="Basic and acidic residues" evidence="6">
    <location>
        <begin position="1471"/>
        <end position="1482"/>
    </location>
</feature>
<feature type="compositionally biased region" description="Basic and acidic residues" evidence="6">
    <location>
        <begin position="1534"/>
        <end position="1547"/>
    </location>
</feature>
<feature type="modified residue" description="Phosphoserine" evidence="3">
    <location>
        <position position="37"/>
    </location>
</feature>
<feature type="modified residue" description="Phosphothreonine" evidence="3">
    <location>
        <position position="378"/>
    </location>
</feature>
<feature type="modified residue" description="Phosphothreonine" evidence="3">
    <location>
        <position position="475"/>
    </location>
</feature>
<feature type="modified residue" description="Phosphoserine" evidence="23">
    <location>
        <position position="583"/>
    </location>
</feature>
<feature type="modified residue" description="Phosphothreonine" evidence="21 23">
    <location>
        <position position="674"/>
    </location>
</feature>
<feature type="modified residue" description="Phosphothreonine" evidence="21 23">
    <location>
        <position position="675"/>
    </location>
</feature>
<feature type="modified residue" description="Phosphoserine" evidence="3">
    <location>
        <position position="694"/>
    </location>
</feature>
<feature type="modified residue" description="Phosphoserine" evidence="3">
    <location>
        <position position="750"/>
    </location>
</feature>
<feature type="modified residue" description="Phosphothreonine" evidence="3">
    <location>
        <position position="812"/>
    </location>
</feature>
<feature type="modified residue" description="Phosphoserine" evidence="3">
    <location>
        <position position="821"/>
    </location>
</feature>
<feature type="modified residue" description="Phosphoserine" evidence="3">
    <location>
        <position position="861"/>
    </location>
</feature>
<feature type="modified residue" description="Phosphoserine" evidence="23">
    <location>
        <position position="925"/>
    </location>
</feature>
<feature type="modified residue" description="Phosphoserine" evidence="3">
    <location>
        <position position="1126"/>
    </location>
</feature>
<feature type="modified residue" description="Phosphoserine" evidence="21 22 23">
    <location>
        <position position="1206"/>
    </location>
</feature>
<feature type="modified residue" description="Phosphoserine" evidence="3">
    <location>
        <position position="1209"/>
    </location>
</feature>
<feature type="modified residue" description="Phosphoserine" evidence="3">
    <location>
        <position position="1212"/>
    </location>
</feature>
<feature type="modified residue" description="Phosphoserine" evidence="3">
    <location>
        <position position="1218"/>
    </location>
</feature>
<feature type="modified residue" description="Phosphoserine" evidence="3">
    <location>
        <position position="1262"/>
    </location>
</feature>
<feature type="modified residue" description="Phosphoserine" evidence="3">
    <location>
        <position position="1265"/>
    </location>
</feature>
<feature type="modified residue" description="Phosphoserine" evidence="3">
    <location>
        <position position="1284"/>
    </location>
</feature>
<feature type="modified residue" description="Omega-N-methylarginine" evidence="24">
    <location>
        <position position="1312"/>
    </location>
</feature>
<feature type="modified residue" description="Phosphoserine" evidence="23">
    <location>
        <position position="1320"/>
    </location>
</feature>
<feature type="modified residue" description="Phosphothreonine" evidence="3">
    <location>
        <position position="1353"/>
    </location>
</feature>
<feature type="modified residue" description="Phosphoserine" evidence="3">
    <location>
        <position position="1359"/>
    </location>
</feature>
<feature type="modified residue" description="Phosphoserine" evidence="23">
    <location>
        <position position="1389"/>
    </location>
</feature>
<feature type="modified residue" description="Phosphoserine" evidence="3">
    <location>
        <position position="1455"/>
    </location>
</feature>
<feature type="modified residue" description="Phosphoserine" evidence="3">
    <location>
        <position position="1458"/>
    </location>
</feature>
<feature type="modified residue" description="Phosphoserine" evidence="23">
    <location>
        <position position="1485"/>
    </location>
</feature>
<feature type="modified residue" description="Phosphoserine" evidence="3">
    <location>
        <position position="1496"/>
    </location>
</feature>
<feature type="modified residue" description="Phosphoserine" evidence="23">
    <location>
        <position position="1518"/>
    </location>
</feature>
<feature type="modified residue" description="Phosphoserine" evidence="3">
    <location>
        <position position="1551"/>
    </location>
</feature>
<feature type="modified residue" description="Phosphothreonine" evidence="3">
    <location>
        <position position="1555"/>
    </location>
</feature>
<feature type="modified residue" description="Phosphoserine" evidence="23">
    <location>
        <position position="1557"/>
    </location>
</feature>
<feature type="modified residue" description="Phosphoserine" evidence="23">
    <location>
        <position position="1571"/>
    </location>
</feature>
<feature type="modified residue" description="Phosphoserine" evidence="20 22 23">
    <location>
        <position position="1601"/>
    </location>
</feature>
<feature type="splice variant" id="VSP_062398" description="In isoform 4." evidence="18">
    <location>
        <begin position="692"/>
        <end position="712"/>
    </location>
</feature>
<feature type="splice variant" id="VSP_062399" description="In isoform 1 and isoform 2." evidence="18">
    <location>
        <begin position="1290"/>
        <end position="1317"/>
    </location>
</feature>
<feature type="splice variant" id="VSP_062400" description="In isoform 1 and isoform 4." evidence="18">
    <location>
        <begin position="1576"/>
        <end position="1600"/>
    </location>
</feature>
<feature type="sequence conflict" description="In Ref. 3; AAH62888." evidence="18" ref="3">
    <original>P</original>
    <variation>L</variation>
    <location>
        <position position="588"/>
    </location>
</feature>
<feature type="sequence conflict" description="In Ref. 3; AAH06859." evidence="18" ref="3">
    <original>EEDDKEEA</original>
    <variation>GRVGGRVG</variation>
    <location>
        <begin position="676"/>
        <end position="683"/>
    </location>
</feature>
<feature type="sequence conflict" description="In Ref. 3; AAH37480." evidence="18" ref="3">
    <original>HSS</original>
    <variation>RVR</variation>
    <location>
        <begin position="947"/>
        <end position="949"/>
    </location>
</feature>
<feature type="sequence conflict" description="In Ref. 4; AAP88019." evidence="18" ref="4">
    <original>P</original>
    <variation>H</variation>
    <location>
        <position position="1080"/>
    </location>
</feature>
<feature type="sequence conflict" description="In Ref. 4; AAP88019." evidence="18" ref="4">
    <original>A</original>
    <variation>T</variation>
    <location>
        <position position="1109"/>
    </location>
</feature>
<feature type="modified residue" description="Omega-N-methylarginine" evidence="24">
    <location sequence="Q80U72-4">
        <position position="1291"/>
    </location>
</feature>
<feature type="modified residue" description="Phosphoserine" evidence="23">
    <location sequence="Q80U72-4">
        <position position="1299"/>
    </location>
</feature>
<accession>Q80U72</accession>
<accession>Q6P5H7</accession>
<accession>Q7TPH8</accession>
<accession>Q80VB1</accession>
<accession>Q8CI48</accession>
<accession>Q8VII1</accession>
<accession>Q922S3</accession>
<proteinExistence type="evidence at protein level"/>
<protein>
    <recommendedName>
        <fullName evidence="18">Protein scribble homolog</fullName>
        <shortName>Scribble</shortName>
    </recommendedName>
    <alternativeName>
        <fullName>Protein LAP4</fullName>
    </alternativeName>
</protein>
<keyword id="KW-0025">Alternative splicing</keyword>
<keyword id="KW-0965">Cell junction</keyword>
<keyword id="KW-1003">Cell membrane</keyword>
<keyword id="KW-0966">Cell projection</keyword>
<keyword id="KW-0175">Coiled coil</keyword>
<keyword id="KW-0963">Cytoplasm</keyword>
<keyword id="KW-0217">Developmental protein</keyword>
<keyword id="KW-0221">Differentiation</keyword>
<keyword id="KW-0433">Leucine-rich repeat</keyword>
<keyword id="KW-0449">Lipoprotein</keyword>
<keyword id="KW-0472">Membrane</keyword>
<keyword id="KW-0488">Methylation</keyword>
<keyword id="KW-0564">Palmitate</keyword>
<keyword id="KW-0597">Phosphoprotein</keyword>
<keyword id="KW-1185">Reference proteome</keyword>
<keyword id="KW-0677">Repeat</keyword>
<keyword id="KW-0770">Synapse</keyword>
<keyword id="KW-0832">Ubl conjugation</keyword>
<sequence>MLKCIPLWRCNRHVESVDKRHCSLQVVPEEIYRYSRSLEELLLDANQLRELPKPFFRLLNLRKLGLSDNEIQRLPPEVANFMQLVELDVSRNDIPEIPESIKFCKALEIADFSGNPLSRLPDGFTQLRSLAHLALNDVSLQALPGDVGNLANLVTLELRENLLKSLPASLSFLVKLEQLDLGGNDLEVLPDTLGALPNLRELWLDRNQLSALPPELGNLRRLVCLDVSENRLEELPVELGGLALLTDLLLSQNLLQRLPEGIGQLKQLSILKVDQNRLCEVTEAIGDCENLSELILTENLLTALPHSLGKLTKLTNLNVDRNHLEVLPPEIGGCVALSVLSLRDNRLAVLPPELAHTAELHVLDVAGNRLRSLPFALTHLNLKALWLAENQAQPMLRFQTEDDAQTGEKVLTCYLLPQQPLPSLEDAGQQSSPSESCSDAPLSRVSVIQFEDTLEGEEDAEEAAAEKRGLQRRATPHPSELKVMKRGIEERRNEAFVCKPDPSPPSPSEEEKRLSAESALSGGSVPSASTASEGEPEILPAEVQGLGQHEAMPAQEEYTEDDYNEPTVHFAEDTLIPREDGESEEGQPEAAWPLPSGRQRLIRKDTPHYKKHFKISKLPQPEAVVALLQGVQTDREGPTAGWHNGPHTPWAPRAHEEEEEEEEENRDEEEGEATTEEDDKEEAVASAPSVKGVSFDQANNLLIEPARIEEEELTLTIVRQTGGLGISIAGGKGSTPYKGDDEGIFISRVSEEGPAARAGVRVGDKLLEVNGVALQDAEHHEAVEALRGAGAAVQMRVWRERMVEPENAVTITPLRPEDDYSPREWRGGGLRLPLLQPETPVSLRQRHAACLVRSEKGLGFSIAGGKGSTPYRAGDGGIFISRIAEGGAAHRAGTLQVGDRVLSINGVDMTEARHDHAVSLLTAASPTISLLLERETGGTYPPSPPPHSSPTPAATVAATVSTAVPGEPLLPRLSPSLLATALEGPYPVEEICLPRAGGPLGLSIVGGSDHSSHPFGVQDPGVFISKVLPRGLAARCGLRVGDRILAVNGQDVREATHQEAVSALLRPCLELCLLVRRDPPPPGMRELCIQKAPGEKLGISIRGGAKGHAGNPCDPTDEGIFISKVSPTGAAGRDGRLRVGLRLLEVNQQSLLGLTHAEAVQLLRSVGDTLTVLVCDGFDTSTTTALEVSPGVIANPFAAGLGHRNSLESISSIDRELSPEGPGKEKELASQALPWESESAETTGRNLEPLKLDYRALAALPSAGSLQRGPSATTGGKTTEAPCSPGSQQTKPGVIQPLAQAWPRNSPAPRGRGGPCSPPSPDELPANVKQAYRAFAAVPTVHPPENSATQPPTPGPAASPEQLSFRERQKYFELEVRVPQAEGPPKRVSLVGADDLRKMQEEEARKLQQKRAQMLREEAVTSGPDMGLASDRESPDDQQEAEQPWAVPSHAGGSSPSSPPPLGGNAPVRTAKAERRHQERLRMQSPELPAPERALSPAERRALEAEKRALWRAARMKSLEQDALRAQMVLSKSQEGRGKRGPLERLAEAPSPAPTPSPTPLEDFGLQTSASPGRLPLSGKKFDYRAFAALPSSRPVYDIQSPDFVEELRTLEASPSPGSQEEDGEVALVLLGRPSPGAVGPEDMTLCSSRRSVRPGRRGLGPVPS</sequence>
<name>SCRIB_MOUSE</name>
<gene>
    <name evidence="19" type="primary">Scrib</name>
    <name type="synonym">Kiaa0147</name>
    <name type="synonym">Lap4</name>
    <name type="synonym">Scrib1</name>
</gene>
<comment type="function">
    <text evidence="2 3 7 13 14 15 17">Scaffold protein involved in different aspects of polarized cell differentiation regulating epithelial and neuronal morphogenesis and T-cell polarization (PubMed:12499390, PubMed:18329370, PubMed:18716323, PubMed:19041750). Via its interaction with CRTAM, required for the late phase polarization of a subset of CD4+ T-cells, which in turn regulates TCR-mediated proliferation and IFNG and IL22 production (PubMed:18329370). Plays a role in cell directional movement, cell orientation, cell sheet organization and Golgi complex polarization at the cell migration front (By similarity). Promotes epithelial cell layer barrier function via maintaining cell-cell adhesion (By similarity). Most probably functions in the establishment of apico-basal cell polarity (PubMed:19041750). May function in cell proliferation regulating progression from G1 to S phase and as a positive regulator of apoptosis for instance during acinar morphogenesis of the mammary epithelium (PubMed:19041750). May regulate cell invasion via MAPK-mediated cell migration and adhesion (PubMed:18716323). May play a role in exocytosis and in the targeting of synaptic vesicles to synapses (PubMed:19458197). Functions as an activator of Rac GTPase activity (By similarity).</text>
</comment>
<comment type="subunit">
    <text evidence="3 8 10 11 12 13 14 16 17">Interacts with UBE3A (By similarity). Interacts with PAK1 and PAK2 (PubMed:18716323). Interacts (via PDZ domains) with VANGL2 (PubMed:16687519). Interacts (via PDZ domains) with LPP and TRIP6; the interaction is direct (By similarity). Interacts (via PDZ domains) with TJP2 (By similarity). Interacts (via PDZ domains) with APC; may mediate APC targeting to adherens junctions of epithelial cells (PubMed:16611247). Interacts (via PDZ domains) with TSHR; regulates TSHR trafficking and function (By similarity). Interacts with ARHGEF7 and GIT1; interacts directly with ARHGEF7 (PubMed:15182672). Interacts with CTNNB1 (PubMed:16611247, PubMed:19458197). Interacts with MAPK12 (PubMed:15878399). Interacts (via PDZ domains 1 and 3) with MCC (By similarity). Interacts with DLG5 (By similarity). Interacts with STK4/MST1 and LATS1 in the presence of DLG5 (By similarity). Interacts (via PDZ domain 3) with CRTAM (via PDZ-binding motif); the interaction promotes CRTAM and SCRIB polarization in a subset of CD4+ T-cells (PubMed:18329370). Interacts with YES1, when YES1 is in a closed conformation; the interaction facilitates YES1 autophosphorylation (By similarity). Interacts (via PDZ domains) with VIM; the interaction protects SCRIB from proteasomal degradation and facilitates SCRIB localization to intermediate filaments, the interaction is reduced by cell contact inhibition (PubMed:19386766).</text>
</comment>
<comment type="interaction">
    <interactant intactId="EBI-1766028">
        <id>Q80U72</id>
    </interactant>
    <interactant intactId="EBI-1766072">
        <id>Q149L7</id>
        <label>Crtam</label>
    </interactant>
    <organismsDiffer>false</organismsDiffer>
    <experiments>4</experiments>
</comment>
<comment type="interaction">
    <interactant intactId="EBI-1766028">
        <id>Q80U72</id>
    </interactant>
    <interactant intactId="EBI-2511516">
        <id>O60346</id>
        <label>PHLPP1</label>
    </interactant>
    <organismsDiffer>true</organismsDiffer>
    <experiments>2</experiments>
</comment>
<comment type="subcellular location">
    <subcellularLocation>
        <location evidence="13">Cell membrane</location>
        <topology evidence="13">Peripheral membrane protein</topology>
    </subcellularLocation>
    <subcellularLocation>
        <location evidence="3">Cell junction</location>
    </subcellularLocation>
    <subcellularLocation>
        <location evidence="3">Cell junction</location>
        <location evidence="3">Adherens junction</location>
    </subcellularLocation>
    <subcellularLocation>
        <location evidence="3">Cell projection</location>
        <location evidence="3">Lamellipodium</location>
    </subcellularLocation>
    <subcellularLocation>
        <location evidence="3">Cytoplasm</location>
    </subcellularLocation>
    <subcellularLocation>
        <location evidence="3">Postsynapse</location>
    </subcellularLocation>
    <subcellularLocation>
        <location evidence="3">Presynapse</location>
    </subcellularLocation>
    <text evidence="2 3 13">Targeting to cell-cell junctions which is CDH1-dependent is required for the pro-apoptotic activity (By similarity). In a subset of CD4+ T-cells, colocalizes with CRTAM at the immunological synapse during the late phase of T-cell activation (PubMed:18329370). Localized to small puncta throughout the cytoplasm and cell membrane when in the presence of SNAIL1 (By similarity). Localized along the length of perinuclear emanating vimentin bundles and at vimentin-positive fibrils at the cell periphery (By similarity). Localized to the lateral plasma membrane during the establishment and maturation of cell-cell contacts (By similarity).</text>
</comment>
<comment type="alternative products">
    <event type="alternative splicing"/>
    <isoform>
        <id>Q80U72-3</id>
        <name>3</name>
        <sequence type="displayed"/>
    </isoform>
    <isoform>
        <id>Q80U72-1</id>
        <name>1</name>
        <sequence type="described" ref="VSP_062399 VSP_062400"/>
    </isoform>
    <isoform>
        <id>Q80U72-2</id>
        <name>2</name>
        <sequence type="described" ref="VSP_062399"/>
    </isoform>
    <isoform>
        <id>Q80U72-4</id>
        <name>4</name>
        <sequence type="described" ref="VSP_062398 VSP_062400"/>
    </isoform>
</comment>
<comment type="tissue specificity">
    <text evidence="8 9 13">Expressed in CD4+ T-cells (at protein level) (PubMed:18329370). Found in a wide range of tissues including liver, kidney and spleen (PubMed:15806148). Also expressed in the brain (at protein level) (PubMed:15182672, PubMed:15806148).</text>
</comment>
<comment type="developmental stage">
    <text evidence="7">First detected at 7.5 dpc in the neuroepithelium at the time of initial neural tube closure. Also expressed in cranial mesenchyme, branchial arches, somitic mesoderm and lateral mesoderm. At later stages it is expressed in the eyelid epithelium, submandibular glands, whisker and hair follicles, sympathetic glanglia, inner ear, thymus, testis, kidney, esophagus, lung, stomach, trigeminal and dorsal root glanglia.</text>
</comment>
<comment type="PTM">
    <text evidence="1">Ubiquitinated; targeted for UBE3A-dependent multiubiquitination and degraded.</text>
</comment>
<comment type="PTM">
    <text evidence="3">Palmitoylated. Could be depalmitoylated by LYPLA1 and/or LYPLA2. Palmitoylation of SCRIB by ZDHHC7 is required for its localization to cell-cell junctions, function in the establishement of epithelial cell polarity and the regulation of downstream signaling pathways important for epithelial cell differentiation.</text>
</comment>
<comment type="miscellaneous">
    <text>The circletail (Crc) mice exhibit craniorachischisis, a severe form of neural tube defect. This is due to a single base insertion in the Scrib gene creating a frameshift which leads to synthesis of a truncated protein.</text>
</comment>
<comment type="similarity">
    <text evidence="18">Belongs to the LAP (LRR and PDZ) protein family.</text>
</comment>
<comment type="sequence caution" evidence="18">
    <conflict type="erroneous initiation">
        <sequence resource="EMBL-CDS" id="BAC65493"/>
    </conflict>
    <text>Extended N-terminus.</text>
</comment>
<dbReference type="EMBL" id="AF441233">
    <property type="protein sequence ID" value="AAL32469.1"/>
    <property type="molecule type" value="mRNA"/>
</dbReference>
<dbReference type="EMBL" id="AK122211">
    <property type="protein sequence ID" value="BAC65493.1"/>
    <property type="status" value="ALT_INIT"/>
    <property type="molecule type" value="mRNA"/>
</dbReference>
<dbReference type="EMBL" id="BC006859">
    <property type="protein sequence ID" value="AAH06859.1"/>
    <property type="molecule type" value="mRNA"/>
</dbReference>
<dbReference type="EMBL" id="BC037480">
    <property type="protein sequence ID" value="AAH37480.1"/>
    <property type="molecule type" value="mRNA"/>
</dbReference>
<dbReference type="EMBL" id="BC049942">
    <property type="protein sequence ID" value="AAH49942.1"/>
    <property type="molecule type" value="mRNA"/>
</dbReference>
<dbReference type="EMBL" id="BC062888">
    <property type="protein sequence ID" value="AAH62888.1"/>
    <property type="molecule type" value="mRNA"/>
</dbReference>
<dbReference type="EMBL" id="AF271735">
    <property type="protein sequence ID" value="AAP88019.1"/>
    <property type="molecule type" value="mRNA"/>
</dbReference>
<dbReference type="CCDS" id="CCDS27560.1">
    <molecule id="Q80U72-3"/>
</dbReference>
<dbReference type="CCDS" id="CCDS79381.1">
    <molecule id="Q80U72-1"/>
</dbReference>
<dbReference type="CCDS" id="CCDS79382.1">
    <molecule id="Q80U72-2"/>
</dbReference>
<dbReference type="RefSeq" id="NP_001297471.1">
    <molecule id="Q80U72-2"/>
    <property type="nucleotide sequence ID" value="NM_001310542.1"/>
</dbReference>
<dbReference type="RefSeq" id="NP_001297472.1">
    <molecule id="Q80U72-1"/>
    <property type="nucleotide sequence ID" value="NM_001310543.1"/>
</dbReference>
<dbReference type="RefSeq" id="NP_598850.1">
    <molecule id="Q80U72-3"/>
    <property type="nucleotide sequence ID" value="NM_134089.2"/>
</dbReference>
<dbReference type="RefSeq" id="XP_017171844.1">
    <molecule id="Q80U72-4"/>
    <property type="nucleotide sequence ID" value="XM_017316355.3"/>
</dbReference>
<dbReference type="SMR" id="Q80U72"/>
<dbReference type="BioGRID" id="222921">
    <property type="interactions" value="12"/>
</dbReference>
<dbReference type="CORUM" id="Q80U72"/>
<dbReference type="DIP" id="DIP-40660N"/>
<dbReference type="FunCoup" id="Q80U72">
    <property type="interactions" value="1617"/>
</dbReference>
<dbReference type="IntAct" id="Q80U72">
    <property type="interactions" value="15"/>
</dbReference>
<dbReference type="MINT" id="Q80U72"/>
<dbReference type="STRING" id="10090.ENSMUSP00000002603"/>
<dbReference type="GlyGen" id="Q80U72">
    <property type="glycosylation" value="5 sites"/>
</dbReference>
<dbReference type="iPTMnet" id="Q80U72"/>
<dbReference type="PhosphoSitePlus" id="Q80U72"/>
<dbReference type="SwissPalm" id="Q80U72"/>
<dbReference type="jPOST" id="Q80U72"/>
<dbReference type="PaxDb" id="10090-ENSMUSP00000002603"/>
<dbReference type="PeptideAtlas" id="Q80U72"/>
<dbReference type="ProteomicsDB" id="261137">
    <molecule id="Q80U72-1"/>
</dbReference>
<dbReference type="ProteomicsDB" id="261138">
    <molecule id="Q80U72-2"/>
</dbReference>
<dbReference type="ProteomicsDB" id="261139">
    <molecule id="Q80U72-3"/>
</dbReference>
<dbReference type="ProteomicsDB" id="261140">
    <molecule id="Q80U72-4"/>
</dbReference>
<dbReference type="Pumba" id="Q80U72"/>
<dbReference type="Antibodypedia" id="43533">
    <property type="antibodies" value="137 antibodies from 28 providers"/>
</dbReference>
<dbReference type="DNASU" id="105782"/>
<dbReference type="Ensembl" id="ENSMUST00000002603.12">
    <molecule id="Q80U72-3"/>
    <property type="protein sequence ID" value="ENSMUSP00000002603.6"/>
    <property type="gene ID" value="ENSMUSG00000022568.18"/>
</dbReference>
<dbReference type="Ensembl" id="ENSMUST00000063747.12">
    <molecule id="Q80U72-1"/>
    <property type="protein sequence ID" value="ENSMUSP00000068056.6"/>
    <property type="gene ID" value="ENSMUSG00000022568.18"/>
</dbReference>
<dbReference type="Ensembl" id="ENSMUST00000109946.9">
    <molecule id="Q80U72-2"/>
    <property type="protein sequence ID" value="ENSMUSP00000105572.3"/>
    <property type="gene ID" value="ENSMUSG00000022568.18"/>
</dbReference>
<dbReference type="GeneID" id="105782"/>
<dbReference type="KEGG" id="mmu:105782"/>
<dbReference type="UCSC" id="uc007wig.1">
    <molecule id="Q80U72-3"/>
    <property type="organism name" value="mouse"/>
</dbReference>
<dbReference type="UCSC" id="uc007wih.1">
    <molecule id="Q80U72-2"/>
    <property type="organism name" value="mouse"/>
</dbReference>
<dbReference type="UCSC" id="uc007wii.1">
    <molecule id="Q80U72-3"/>
    <property type="organism name" value="mouse"/>
</dbReference>
<dbReference type="AGR" id="MGI:2145950"/>
<dbReference type="CTD" id="23513"/>
<dbReference type="MGI" id="MGI:2145950">
    <property type="gene designation" value="Scrib"/>
</dbReference>
<dbReference type="VEuPathDB" id="HostDB:ENSMUSG00000022568"/>
<dbReference type="eggNOG" id="KOG0619">
    <property type="taxonomic scope" value="Eukaryota"/>
</dbReference>
<dbReference type="GeneTree" id="ENSGT00940000154025"/>
<dbReference type="HOGENOM" id="CLU_000288_18_20_1"/>
<dbReference type="InParanoid" id="Q80U72"/>
<dbReference type="OMA" id="HYTKRAR"/>
<dbReference type="OrthoDB" id="73388at9989"/>
<dbReference type="PhylomeDB" id="Q80U72"/>
<dbReference type="TreeFam" id="TF351429"/>
<dbReference type="Reactome" id="R-MMU-9013406">
    <property type="pathway name" value="RHOQ GTPase cycle"/>
</dbReference>
<dbReference type="Reactome" id="R-MMU-9696264">
    <property type="pathway name" value="RND3 GTPase cycle"/>
</dbReference>
<dbReference type="Reactome" id="R-MMU-9696270">
    <property type="pathway name" value="RND2 GTPase cycle"/>
</dbReference>
<dbReference type="BioGRID-ORCS" id="105782">
    <property type="hits" value="9 hits in 81 CRISPR screens"/>
</dbReference>
<dbReference type="ChiTaRS" id="Scrib">
    <property type="organism name" value="mouse"/>
</dbReference>
<dbReference type="PRO" id="PR:Q80U72"/>
<dbReference type="Proteomes" id="UP000000589">
    <property type="component" value="Chromosome 15"/>
</dbReference>
<dbReference type="RNAct" id="Q80U72">
    <property type="molecule type" value="protein"/>
</dbReference>
<dbReference type="Bgee" id="ENSMUSG00000022568">
    <property type="expression patterns" value="Expressed in ear vesicle and 268 other cell types or tissues"/>
</dbReference>
<dbReference type="ExpressionAtlas" id="Q80U72">
    <property type="expression patterns" value="baseline and differential"/>
</dbReference>
<dbReference type="GO" id="GO:0005912">
    <property type="term" value="C:adherens junction"/>
    <property type="evidence" value="ECO:0000250"/>
    <property type="project" value="UniProtKB"/>
</dbReference>
<dbReference type="GO" id="GO:0016324">
    <property type="term" value="C:apical plasma membrane"/>
    <property type="evidence" value="ECO:0000304"/>
    <property type="project" value="MGI"/>
</dbReference>
<dbReference type="GO" id="GO:0016323">
    <property type="term" value="C:basolateral plasma membrane"/>
    <property type="evidence" value="ECO:0000314"/>
    <property type="project" value="MGI"/>
</dbReference>
<dbReference type="GO" id="GO:0044291">
    <property type="term" value="C:cell-cell contact zone"/>
    <property type="evidence" value="ECO:0000314"/>
    <property type="project" value="MGI"/>
</dbReference>
<dbReference type="GO" id="GO:0005911">
    <property type="term" value="C:cell-cell junction"/>
    <property type="evidence" value="ECO:0000250"/>
    <property type="project" value="UniProtKB"/>
</dbReference>
<dbReference type="GO" id="GO:0005737">
    <property type="term" value="C:cytoplasm"/>
    <property type="evidence" value="ECO:0000250"/>
    <property type="project" value="UniProtKB"/>
</dbReference>
<dbReference type="GO" id="GO:0005829">
    <property type="term" value="C:cytosol"/>
    <property type="evidence" value="ECO:0000304"/>
    <property type="project" value="Reactome"/>
</dbReference>
<dbReference type="GO" id="GO:0099147">
    <property type="term" value="C:extrinsic component of postsynaptic density membrane"/>
    <property type="evidence" value="ECO:0007669"/>
    <property type="project" value="Ensembl"/>
</dbReference>
<dbReference type="GO" id="GO:0098978">
    <property type="term" value="C:glutamatergic synapse"/>
    <property type="evidence" value="ECO:0007669"/>
    <property type="project" value="Ensembl"/>
</dbReference>
<dbReference type="GO" id="GO:0001772">
    <property type="term" value="C:immunological synapse"/>
    <property type="evidence" value="ECO:0000314"/>
    <property type="project" value="UniProtKB"/>
</dbReference>
<dbReference type="GO" id="GO:0030027">
    <property type="term" value="C:lamellipodium"/>
    <property type="evidence" value="ECO:0007669"/>
    <property type="project" value="UniProtKB-SubCell"/>
</dbReference>
<dbReference type="GO" id="GO:0035748">
    <property type="term" value="C:myelin sheath abaxonal region"/>
    <property type="evidence" value="ECO:0000314"/>
    <property type="project" value="BHF-UCL"/>
</dbReference>
<dbReference type="GO" id="GO:0005654">
    <property type="term" value="C:nucleoplasm"/>
    <property type="evidence" value="ECO:0007669"/>
    <property type="project" value="Ensembl"/>
</dbReference>
<dbReference type="GO" id="GO:0005886">
    <property type="term" value="C:plasma membrane"/>
    <property type="evidence" value="ECO:0000250"/>
    <property type="project" value="UniProtKB"/>
</dbReference>
<dbReference type="GO" id="GO:0042734">
    <property type="term" value="C:presynaptic membrane"/>
    <property type="evidence" value="ECO:0007669"/>
    <property type="project" value="Ensembl"/>
</dbReference>
<dbReference type="GO" id="GO:0034750">
    <property type="term" value="C:Scrib-APC-beta-catenin complex"/>
    <property type="evidence" value="ECO:0007669"/>
    <property type="project" value="Ensembl"/>
</dbReference>
<dbReference type="GO" id="GO:0035591">
    <property type="term" value="F:signaling adaptor activity"/>
    <property type="evidence" value="ECO:0007669"/>
    <property type="project" value="Ensembl"/>
</dbReference>
<dbReference type="GO" id="GO:0090630">
    <property type="term" value="P:activation of GTPase activity"/>
    <property type="evidence" value="ECO:0000250"/>
    <property type="project" value="UniProtKB"/>
</dbReference>
<dbReference type="GO" id="GO:0060561">
    <property type="term" value="P:apoptotic process involved in morphogenesis"/>
    <property type="evidence" value="ECO:0000250"/>
    <property type="project" value="UniProtKB"/>
</dbReference>
<dbReference type="GO" id="GO:0043615">
    <property type="term" value="P:astrocyte cell migration"/>
    <property type="evidence" value="ECO:0007669"/>
    <property type="project" value="Ensembl"/>
</dbReference>
<dbReference type="GO" id="GO:0002093">
    <property type="term" value="P:auditory receptor cell morphogenesis"/>
    <property type="evidence" value="ECO:0000316"/>
    <property type="project" value="MGI"/>
</dbReference>
<dbReference type="GO" id="GO:0060088">
    <property type="term" value="P:auditory receptor cell stereocilium organization"/>
    <property type="evidence" value="ECO:0000316"/>
    <property type="project" value="MGI"/>
</dbReference>
<dbReference type="GO" id="GO:0048593">
    <property type="term" value="P:camera-type eye morphogenesis"/>
    <property type="evidence" value="ECO:0000304"/>
    <property type="project" value="MGI"/>
</dbReference>
<dbReference type="GO" id="GO:0016477">
    <property type="term" value="P:cell migration"/>
    <property type="evidence" value="ECO:0000315"/>
    <property type="project" value="UniProtKB"/>
</dbReference>
<dbReference type="GO" id="GO:0008283">
    <property type="term" value="P:cell population proliferation"/>
    <property type="evidence" value="ECO:0000250"/>
    <property type="project" value="UniProtKB"/>
</dbReference>
<dbReference type="GO" id="GO:0098609">
    <property type="term" value="P:cell-cell adhesion"/>
    <property type="evidence" value="ECO:0000250"/>
    <property type="project" value="UniProtKB"/>
</dbReference>
<dbReference type="GO" id="GO:0021747">
    <property type="term" value="P:cochlear nucleus development"/>
    <property type="evidence" value="ECO:0000316"/>
    <property type="project" value="MGI"/>
</dbReference>
<dbReference type="GO" id="GO:0003382">
    <property type="term" value="P:epithelial cell morphogenesis"/>
    <property type="evidence" value="ECO:0000304"/>
    <property type="project" value="MGI"/>
</dbReference>
<dbReference type="GO" id="GO:0010669">
    <property type="term" value="P:epithelial structure maintenance"/>
    <property type="evidence" value="ECO:0000250"/>
    <property type="project" value="UniProtKB"/>
</dbReference>
<dbReference type="GO" id="GO:0035089">
    <property type="term" value="P:establishment of apical/basal cell polarity"/>
    <property type="evidence" value="ECO:0000250"/>
    <property type="project" value="UniProtKB"/>
</dbReference>
<dbReference type="GO" id="GO:0001768">
    <property type="term" value="P:establishment of T cell polarity"/>
    <property type="evidence" value="ECO:0000314"/>
    <property type="project" value="UniProtKB"/>
</dbReference>
<dbReference type="GO" id="GO:0045197">
    <property type="term" value="P:establishment or maintenance of epithelial cell apical/basal polarity"/>
    <property type="evidence" value="ECO:0000304"/>
    <property type="project" value="MGI"/>
</dbReference>
<dbReference type="GO" id="GO:0060122">
    <property type="term" value="P:inner ear receptor cell stereocilium organization"/>
    <property type="evidence" value="ECO:0000315"/>
    <property type="project" value="MGI"/>
</dbReference>
<dbReference type="GO" id="GO:0060603">
    <property type="term" value="P:mammary gland duct morphogenesis"/>
    <property type="evidence" value="ECO:0000315"/>
    <property type="project" value="UniProtKB"/>
</dbReference>
<dbReference type="GO" id="GO:0016331">
    <property type="term" value="P:morphogenesis of embryonic epithelium"/>
    <property type="evidence" value="ECO:0000315"/>
    <property type="project" value="MGI"/>
</dbReference>
<dbReference type="GO" id="GO:0046007">
    <property type="term" value="P:negative regulation of activated T cell proliferation"/>
    <property type="evidence" value="ECO:0000315"/>
    <property type="project" value="UniProtKB"/>
</dbReference>
<dbReference type="GO" id="GO:0045930">
    <property type="term" value="P:negative regulation of mitotic cell cycle"/>
    <property type="evidence" value="ECO:0000250"/>
    <property type="project" value="UniProtKB"/>
</dbReference>
<dbReference type="GO" id="GO:0001843">
    <property type="term" value="P:neural tube closure"/>
    <property type="evidence" value="ECO:0000315"/>
    <property type="project" value="MGI"/>
</dbReference>
<dbReference type="GO" id="GO:0098887">
    <property type="term" value="P:neurotransmitter receptor transport, endosome to postsynaptic membrane"/>
    <property type="evidence" value="ECO:0007669"/>
    <property type="project" value="Ensembl"/>
</dbReference>
<dbReference type="GO" id="GO:0030859">
    <property type="term" value="P:polarized epithelial cell differentiation"/>
    <property type="evidence" value="ECO:0007669"/>
    <property type="project" value="Ensembl"/>
</dbReference>
<dbReference type="GO" id="GO:0050918">
    <property type="term" value="P:positive chemotaxis"/>
    <property type="evidence" value="ECO:0000315"/>
    <property type="project" value="UniProtKB"/>
</dbReference>
<dbReference type="GO" id="GO:0043065">
    <property type="term" value="P:positive regulation of apoptotic process"/>
    <property type="evidence" value="ECO:0000250"/>
    <property type="project" value="UniProtKB"/>
</dbReference>
<dbReference type="GO" id="GO:0010634">
    <property type="term" value="P:positive regulation of epithelial cell migration"/>
    <property type="evidence" value="ECO:0000250"/>
    <property type="project" value="UniProtKB"/>
</dbReference>
<dbReference type="GO" id="GO:0001921">
    <property type="term" value="P:positive regulation of receptor recycling"/>
    <property type="evidence" value="ECO:0007669"/>
    <property type="project" value="Ensembl"/>
</dbReference>
<dbReference type="GO" id="GO:0032729">
    <property type="term" value="P:positive regulation of type II interferon production"/>
    <property type="evidence" value="ECO:0000315"/>
    <property type="project" value="UniProtKB"/>
</dbReference>
<dbReference type="GO" id="GO:0036342">
    <property type="term" value="P:post-anal tail morphogenesis"/>
    <property type="evidence" value="ECO:0000315"/>
    <property type="project" value="MGI"/>
</dbReference>
<dbReference type="GO" id="GO:0008104">
    <property type="term" value="P:protein localization"/>
    <property type="evidence" value="ECO:0000315"/>
    <property type="project" value="MGI"/>
</dbReference>
<dbReference type="GO" id="GO:0071896">
    <property type="term" value="P:protein localization to adherens junction"/>
    <property type="evidence" value="ECO:0007669"/>
    <property type="project" value="Ensembl"/>
</dbReference>
<dbReference type="GO" id="GO:0099149">
    <property type="term" value="P:regulation of postsynaptic neurotransmitter receptor internalization"/>
    <property type="evidence" value="ECO:0007669"/>
    <property type="project" value="Ensembl"/>
</dbReference>
<dbReference type="GO" id="GO:0048488">
    <property type="term" value="P:synaptic vesicle endocytosis"/>
    <property type="evidence" value="ECO:0000314"/>
    <property type="project" value="SynGO"/>
</dbReference>
<dbReference type="GO" id="GO:0016080">
    <property type="term" value="P:synaptic vesicle targeting"/>
    <property type="evidence" value="ECO:0000315"/>
    <property type="project" value="UniProtKB"/>
</dbReference>
<dbReference type="GO" id="GO:0042060">
    <property type="term" value="P:wound healing"/>
    <property type="evidence" value="ECO:0000316"/>
    <property type="project" value="MGI"/>
</dbReference>
<dbReference type="CDD" id="cd06704">
    <property type="entry name" value="PDZ1_Scribble-like"/>
    <property type="match status" value="1"/>
</dbReference>
<dbReference type="CDD" id="cd06703">
    <property type="entry name" value="PDZ2_Scribble-like"/>
    <property type="match status" value="1"/>
</dbReference>
<dbReference type="CDD" id="cd06702">
    <property type="entry name" value="PDZ3_Scribble-like"/>
    <property type="match status" value="1"/>
</dbReference>
<dbReference type="CDD" id="cd06701">
    <property type="entry name" value="PDZ4_Scribble-like"/>
    <property type="match status" value="1"/>
</dbReference>
<dbReference type="FunFam" id="2.30.42.10:FF:000064">
    <property type="entry name" value="protein lap4 isoform X1"/>
    <property type="match status" value="1"/>
</dbReference>
<dbReference type="FunFam" id="2.30.42.10:FF:000041">
    <property type="entry name" value="protein scribble homolog isoform X1"/>
    <property type="match status" value="1"/>
</dbReference>
<dbReference type="FunFam" id="2.30.42.10:FF:000114">
    <property type="entry name" value="protein scribble homolog isoform X1"/>
    <property type="match status" value="1"/>
</dbReference>
<dbReference type="FunFam" id="3.80.10.10:FF:000036">
    <property type="entry name" value="protein scribble homolog isoform X1"/>
    <property type="match status" value="1"/>
</dbReference>
<dbReference type="FunFam" id="3.80.10.10:FF:000072">
    <property type="entry name" value="protein scribble homolog isoform X1"/>
    <property type="match status" value="1"/>
</dbReference>
<dbReference type="FunFam" id="2.30.42.10:FF:000074">
    <property type="entry name" value="protein scribble homolog isoform X2"/>
    <property type="match status" value="1"/>
</dbReference>
<dbReference type="FunFam" id="3.80.10.10:FF:000202">
    <property type="entry name" value="protein scribble homolog isoform X2"/>
    <property type="match status" value="1"/>
</dbReference>
<dbReference type="FunFam" id="3.80.10.10:FF:000064">
    <property type="entry name" value="Scribbled planar cell polarity protein"/>
    <property type="match status" value="1"/>
</dbReference>
<dbReference type="Gene3D" id="2.30.42.10">
    <property type="match status" value="4"/>
</dbReference>
<dbReference type="Gene3D" id="3.80.10.10">
    <property type="entry name" value="Ribonuclease Inhibitor"/>
    <property type="match status" value="4"/>
</dbReference>
<dbReference type="InterPro" id="IPR001611">
    <property type="entry name" value="Leu-rich_rpt"/>
</dbReference>
<dbReference type="InterPro" id="IPR003591">
    <property type="entry name" value="Leu-rich_rpt_typical-subtyp"/>
</dbReference>
<dbReference type="InterPro" id="IPR032675">
    <property type="entry name" value="LRR_dom_sf"/>
</dbReference>
<dbReference type="InterPro" id="IPR055414">
    <property type="entry name" value="LRR_R13L4/SHOC2-like"/>
</dbReference>
<dbReference type="InterPro" id="IPR001478">
    <property type="entry name" value="PDZ"/>
</dbReference>
<dbReference type="InterPro" id="IPR036034">
    <property type="entry name" value="PDZ_sf"/>
</dbReference>
<dbReference type="InterPro" id="IPR050614">
    <property type="entry name" value="Synaptic_Scaffolding_LAP-MAGUK"/>
</dbReference>
<dbReference type="PANTHER" id="PTHR23119">
    <property type="entry name" value="DISCS LARGE"/>
    <property type="match status" value="1"/>
</dbReference>
<dbReference type="PANTHER" id="PTHR23119:SF57">
    <property type="entry name" value="PROTEIN SCRIBBLE HOMOLOG"/>
    <property type="match status" value="1"/>
</dbReference>
<dbReference type="Pfam" id="PF23598">
    <property type="entry name" value="LRR_14"/>
    <property type="match status" value="1"/>
</dbReference>
<dbReference type="Pfam" id="PF13855">
    <property type="entry name" value="LRR_8"/>
    <property type="match status" value="2"/>
</dbReference>
<dbReference type="Pfam" id="PF00595">
    <property type="entry name" value="PDZ"/>
    <property type="match status" value="4"/>
</dbReference>
<dbReference type="SMART" id="SM00364">
    <property type="entry name" value="LRR_BAC"/>
    <property type="match status" value="11"/>
</dbReference>
<dbReference type="SMART" id="SM00369">
    <property type="entry name" value="LRR_TYP"/>
    <property type="match status" value="12"/>
</dbReference>
<dbReference type="SMART" id="SM00228">
    <property type="entry name" value="PDZ"/>
    <property type="match status" value="4"/>
</dbReference>
<dbReference type="SUPFAM" id="SSF52058">
    <property type="entry name" value="L domain-like"/>
    <property type="match status" value="2"/>
</dbReference>
<dbReference type="SUPFAM" id="SSF50156">
    <property type="entry name" value="PDZ domain-like"/>
    <property type="match status" value="4"/>
</dbReference>
<dbReference type="PROSITE" id="PS51450">
    <property type="entry name" value="LRR"/>
    <property type="match status" value="13"/>
</dbReference>
<dbReference type="PROSITE" id="PS50106">
    <property type="entry name" value="PDZ"/>
    <property type="match status" value="4"/>
</dbReference>
<evidence type="ECO:0000250" key="1"/>
<evidence type="ECO:0000250" key="2">
    <source>
        <dbReference type="UniProtKB" id="A0A8P0N4K0"/>
    </source>
</evidence>
<evidence type="ECO:0000250" key="3">
    <source>
        <dbReference type="UniProtKB" id="Q14160"/>
    </source>
</evidence>
<evidence type="ECO:0000255" key="4"/>
<evidence type="ECO:0000255" key="5">
    <source>
        <dbReference type="PROSITE-ProRule" id="PRU00143"/>
    </source>
</evidence>
<evidence type="ECO:0000256" key="6">
    <source>
        <dbReference type="SAM" id="MobiDB-lite"/>
    </source>
</evidence>
<evidence type="ECO:0000269" key="7">
    <source>
    </source>
</evidence>
<evidence type="ECO:0000269" key="8">
    <source>
    </source>
</evidence>
<evidence type="ECO:0000269" key="9">
    <source>
    </source>
</evidence>
<evidence type="ECO:0000269" key="10">
    <source>
    </source>
</evidence>
<evidence type="ECO:0000269" key="11">
    <source>
    </source>
</evidence>
<evidence type="ECO:0000269" key="12">
    <source>
    </source>
</evidence>
<evidence type="ECO:0000269" key="13">
    <source>
    </source>
</evidence>
<evidence type="ECO:0000269" key="14">
    <source>
    </source>
</evidence>
<evidence type="ECO:0000269" key="15">
    <source>
    </source>
</evidence>
<evidence type="ECO:0000269" key="16">
    <source>
    </source>
</evidence>
<evidence type="ECO:0000269" key="17">
    <source>
    </source>
</evidence>
<evidence type="ECO:0000305" key="18"/>
<evidence type="ECO:0000312" key="19">
    <source>
        <dbReference type="MGI" id="MGI:2145950"/>
    </source>
</evidence>
<evidence type="ECO:0007744" key="20">
    <source>
    </source>
</evidence>
<evidence type="ECO:0007744" key="21">
    <source>
    </source>
</evidence>
<evidence type="ECO:0007744" key="22">
    <source>
    </source>
</evidence>
<evidence type="ECO:0007744" key="23">
    <source>
    </source>
</evidence>
<evidence type="ECO:0007744" key="24">
    <source>
    </source>
</evidence>